<feature type="signal peptide" evidence="2">
    <location>
        <begin position="1"/>
        <end position="25"/>
    </location>
</feature>
<feature type="chain" id="PRO_0000379637" description="Putative defensin-like protein 57">
    <location>
        <begin position="26"/>
        <end position="73"/>
    </location>
</feature>
<feature type="disulfide bond" evidence="1">
    <location>
        <begin position="37"/>
        <end position="71"/>
    </location>
</feature>
<feature type="disulfide bond" evidence="1">
    <location>
        <begin position="41"/>
        <end position="64"/>
    </location>
</feature>
<feature type="disulfide bond" evidence="1">
    <location>
        <begin position="50"/>
        <end position="69"/>
    </location>
</feature>
<feature type="disulfide bond" evidence="1">
    <location>
        <begin position="54"/>
        <end position="70"/>
    </location>
</feature>
<protein>
    <recommendedName>
        <fullName>Putative defensin-like protein 57</fullName>
    </recommendedName>
</protein>
<gene>
    <name type="ordered locus">At2g03913</name>
    <name type="ORF">F3C11</name>
</gene>
<organism>
    <name type="scientific">Arabidopsis thaliana</name>
    <name type="common">Mouse-ear cress</name>
    <dbReference type="NCBI Taxonomy" id="3702"/>
    <lineage>
        <taxon>Eukaryota</taxon>
        <taxon>Viridiplantae</taxon>
        <taxon>Streptophyta</taxon>
        <taxon>Embryophyta</taxon>
        <taxon>Tracheophyta</taxon>
        <taxon>Spermatophyta</taxon>
        <taxon>Magnoliopsida</taxon>
        <taxon>eudicotyledons</taxon>
        <taxon>Gunneridae</taxon>
        <taxon>Pentapetalae</taxon>
        <taxon>rosids</taxon>
        <taxon>malvids</taxon>
        <taxon>Brassicales</taxon>
        <taxon>Brassicaceae</taxon>
        <taxon>Camelineae</taxon>
        <taxon>Arabidopsis</taxon>
    </lineage>
</organism>
<keyword id="KW-0929">Antimicrobial</keyword>
<keyword id="KW-1015">Disulfide bond</keyword>
<keyword id="KW-0295">Fungicide</keyword>
<keyword id="KW-0611">Plant defense</keyword>
<keyword id="KW-1185">Reference proteome</keyword>
<keyword id="KW-0964">Secreted</keyword>
<keyword id="KW-0732">Signal</keyword>
<name>DEF57_ARATH</name>
<evidence type="ECO:0000250" key="1"/>
<evidence type="ECO:0000255" key="2"/>
<evidence type="ECO:0000305" key="3"/>
<sequence length="73" mass="8379">MRFTSMIFVLVVILINSLFNFNVLASSVIETTKNDVCSTPCTRRYGTYECWHDCLHERYNDGGCVDGRCCCKK</sequence>
<dbReference type="EMBL" id="AC007167">
    <property type="status" value="NOT_ANNOTATED_CDS"/>
    <property type="molecule type" value="Genomic_DNA"/>
</dbReference>
<dbReference type="EMBL" id="CP002685">
    <property type="protein sequence ID" value="AEC05765.1"/>
    <property type="molecule type" value="Genomic_DNA"/>
</dbReference>
<dbReference type="RefSeq" id="NP_001030967.1">
    <property type="nucleotide sequence ID" value="NM_001035890.2"/>
</dbReference>
<dbReference type="SMR" id="Q2V4A8"/>
<dbReference type="PaxDb" id="3702-AT2G03913.1"/>
<dbReference type="EnsemblPlants" id="AT2G03913.1">
    <property type="protein sequence ID" value="AT2G03913.1"/>
    <property type="gene ID" value="AT2G03913"/>
</dbReference>
<dbReference type="GeneID" id="3768286"/>
<dbReference type="Gramene" id="AT2G03913.1">
    <property type="protein sequence ID" value="AT2G03913.1"/>
    <property type="gene ID" value="AT2G03913"/>
</dbReference>
<dbReference type="KEGG" id="ath:AT2G03913"/>
<dbReference type="Araport" id="AT2G03913"/>
<dbReference type="TAIR" id="AT2G03913"/>
<dbReference type="HOGENOM" id="CLU_165205_2_0_1"/>
<dbReference type="InParanoid" id="Q2V4A8"/>
<dbReference type="OMA" id="YECWHDC"/>
<dbReference type="PhylomeDB" id="Q2V4A8"/>
<dbReference type="PRO" id="PR:Q2V4A8"/>
<dbReference type="Proteomes" id="UP000006548">
    <property type="component" value="Chromosome 2"/>
</dbReference>
<dbReference type="ExpressionAtlas" id="Q2V4A8">
    <property type="expression patterns" value="baseline"/>
</dbReference>
<dbReference type="GO" id="GO:0005576">
    <property type="term" value="C:extracellular region"/>
    <property type="evidence" value="ECO:0007669"/>
    <property type="project" value="UniProtKB-SubCell"/>
</dbReference>
<dbReference type="GO" id="GO:0050832">
    <property type="term" value="P:defense response to fungus"/>
    <property type="evidence" value="ECO:0007669"/>
    <property type="project" value="UniProtKB-KW"/>
</dbReference>
<dbReference type="GO" id="GO:0031640">
    <property type="term" value="P:killing of cells of another organism"/>
    <property type="evidence" value="ECO:0007669"/>
    <property type="project" value="UniProtKB-KW"/>
</dbReference>
<dbReference type="InterPro" id="IPR056373">
    <property type="entry name" value="Defensin-like_dom"/>
</dbReference>
<dbReference type="Pfam" id="PF24552">
    <property type="entry name" value="Defensin"/>
    <property type="match status" value="1"/>
</dbReference>
<comment type="subcellular location">
    <subcellularLocation>
        <location evidence="1">Secreted</location>
    </subcellularLocation>
</comment>
<comment type="similarity">
    <text evidence="3">Belongs to the DEFL family.</text>
</comment>
<accession>Q2V4A8</accession>
<reference key="1">
    <citation type="journal article" date="1999" name="Nature">
        <title>Sequence and analysis of chromosome 2 of the plant Arabidopsis thaliana.</title>
        <authorList>
            <person name="Lin X."/>
            <person name="Kaul S."/>
            <person name="Rounsley S.D."/>
            <person name="Shea T.P."/>
            <person name="Benito M.-I."/>
            <person name="Town C.D."/>
            <person name="Fujii C.Y."/>
            <person name="Mason T.M."/>
            <person name="Bowman C.L."/>
            <person name="Barnstead M.E."/>
            <person name="Feldblyum T.V."/>
            <person name="Buell C.R."/>
            <person name="Ketchum K.A."/>
            <person name="Lee J.J."/>
            <person name="Ronning C.M."/>
            <person name="Koo H.L."/>
            <person name="Moffat K.S."/>
            <person name="Cronin L.A."/>
            <person name="Shen M."/>
            <person name="Pai G."/>
            <person name="Van Aken S."/>
            <person name="Umayam L."/>
            <person name="Tallon L.J."/>
            <person name="Gill J.E."/>
            <person name="Adams M.D."/>
            <person name="Carrera A.J."/>
            <person name="Creasy T.H."/>
            <person name="Goodman H.M."/>
            <person name="Somerville C.R."/>
            <person name="Copenhaver G.P."/>
            <person name="Preuss D."/>
            <person name="Nierman W.C."/>
            <person name="White O."/>
            <person name="Eisen J.A."/>
            <person name="Salzberg S.L."/>
            <person name="Fraser C.M."/>
            <person name="Venter J.C."/>
        </authorList>
    </citation>
    <scope>NUCLEOTIDE SEQUENCE [LARGE SCALE GENOMIC DNA]</scope>
    <source>
        <strain>cv. Columbia</strain>
    </source>
</reference>
<reference key="2">
    <citation type="journal article" date="2017" name="Plant J.">
        <title>Araport11: a complete reannotation of the Arabidopsis thaliana reference genome.</title>
        <authorList>
            <person name="Cheng C.Y."/>
            <person name="Krishnakumar V."/>
            <person name="Chan A.P."/>
            <person name="Thibaud-Nissen F."/>
            <person name="Schobel S."/>
            <person name="Town C.D."/>
        </authorList>
    </citation>
    <scope>GENOME REANNOTATION</scope>
    <source>
        <strain>cv. Columbia</strain>
    </source>
</reference>
<reference key="3">
    <citation type="journal article" date="2005" name="Plant Physiol.">
        <title>Genome organization of more than 300 defensin-like genes in Arabidopsis.</title>
        <authorList>
            <person name="Silverstein K.A.T."/>
            <person name="Graham M.A."/>
            <person name="Paape T.D."/>
            <person name="VandenBosch K.A."/>
        </authorList>
    </citation>
    <scope>GENE FAMILY</scope>
</reference>
<proteinExistence type="inferred from homology"/>